<proteinExistence type="evidence at transcript level"/>
<evidence type="ECO:0000250" key="1"/>
<evidence type="ECO:0000256" key="2">
    <source>
        <dbReference type="SAM" id="MobiDB-lite"/>
    </source>
</evidence>
<feature type="signal peptide">
    <location>
        <begin position="1"/>
        <end position="27"/>
    </location>
</feature>
<feature type="chain" id="PRO_0000022011" description="Procyclic form-specific polypeptide A-alpha">
    <location>
        <begin position="28"/>
        <end position="92"/>
    </location>
</feature>
<feature type="propeptide" id="PRO_0000022012" evidence="1">
    <location>
        <begin position="93"/>
        <end position="114"/>
    </location>
</feature>
<feature type="repeat" description="1">
    <location>
        <begin position="48"/>
        <end position="52"/>
    </location>
</feature>
<feature type="repeat" description="2">
    <location>
        <begin position="56"/>
        <end position="60"/>
    </location>
</feature>
<feature type="repeat" description="3">
    <location>
        <begin position="61"/>
        <end position="65"/>
    </location>
</feature>
<feature type="repeat" description="4">
    <location>
        <begin position="66"/>
        <end position="70"/>
    </location>
</feature>
<feature type="repeat" description="5">
    <location>
        <begin position="71"/>
        <end position="75"/>
    </location>
</feature>
<feature type="repeat" description="6">
    <location>
        <begin position="76"/>
        <end position="80"/>
    </location>
</feature>
<feature type="repeat" description="7">
    <location>
        <begin position="81"/>
        <end position="85"/>
    </location>
</feature>
<feature type="region of interest" description="Disordered" evidence="2">
    <location>
        <begin position="33"/>
        <end position="95"/>
    </location>
</feature>
<feature type="region of interest" description="7 X 5 AA tandem repeats of G-P-E-E-[PT]">
    <location>
        <begin position="48"/>
        <end position="85"/>
    </location>
</feature>
<feature type="compositionally biased region" description="Acidic residues" evidence="2">
    <location>
        <begin position="47"/>
        <end position="89"/>
    </location>
</feature>
<feature type="lipid moiety-binding region" description="GPI-anchor amidated glycine" evidence="1">
    <location>
        <position position="92"/>
    </location>
</feature>
<reference key="1">
    <citation type="journal article" date="1989" name="Mol. Cell. Biol.">
        <title>Variation of tandem repeats in the developmentally regulated procyclic acidic repetitive proteins of Trypanosoma brucei.</title>
        <authorList>
            <person name="Mowatt M.R."/>
            <person name="Wisdom G.S."/>
            <person name="Clayton C.E."/>
        </authorList>
    </citation>
    <scope>NUCLEOTIDE SEQUENCE [GENOMIC DNA]</scope>
</reference>
<reference key="2">
    <citation type="journal article" date="1990" name="Mol. Cell. Biol.">
        <title>Transcription of the procyclic acidic repetitive protein genes of Trypanosoma brucei.</title>
        <authorList>
            <person name="Clayton C.E."/>
            <person name="Fueri J.P."/>
            <person name="Itzhaki J.E."/>
            <person name="Bellofatto V."/>
            <person name="Sherman D.R."/>
            <person name="Wisdom G.S."/>
            <person name="Vijayasarathy S."/>
            <person name="Mowatt M.R."/>
        </authorList>
    </citation>
    <scope>NUCLEOTIDE SEQUENCE [GENOMIC DNA]</scope>
</reference>
<reference key="3">
    <citation type="submission" date="1992-06" db="EMBL/GenBank/DDBJ databases">
        <authorList>
            <person name="Vijayasarathy S."/>
            <person name="Ernest I."/>
            <person name="Itzhaki J."/>
            <person name="Sherman D."/>
            <person name="Mowatt M.R."/>
            <person name="Michels P.A.M."/>
            <person name="Clayton C.E."/>
        </authorList>
    </citation>
    <scope>NUCLEOTIDE SEQUENCE [GENOMIC DNA]</scope>
    <source>
        <strain>427</strain>
    </source>
</reference>
<accession>P18764</accession>
<gene>
    <name type="primary">PARPA-ALPHA</name>
</gene>
<keyword id="KW-1003">Cell membrane</keyword>
<keyword id="KW-0325">Glycoprotein</keyword>
<keyword id="KW-0336">GPI-anchor</keyword>
<keyword id="KW-0449">Lipoprotein</keyword>
<keyword id="KW-0472">Membrane</keyword>
<keyword id="KW-0677">Repeat</keyword>
<keyword id="KW-0732">Signal</keyword>
<dbReference type="EMBL" id="M25787">
    <property type="protein sequence ID" value="AAA53283.1"/>
    <property type="molecule type" value="Genomic_DNA"/>
</dbReference>
<dbReference type="EMBL" id="M33129">
    <property type="protein sequence ID" value="AAA30224.1"/>
    <property type="molecule type" value="Genomic_DNA"/>
</dbReference>
<dbReference type="EMBL" id="X52584">
    <property type="protein sequence ID" value="CAA36814.1"/>
    <property type="molecule type" value="Genomic_DNA"/>
</dbReference>
<dbReference type="PIR" id="A30229">
    <property type="entry name" value="A30229"/>
</dbReference>
<dbReference type="GO" id="GO:0005886">
    <property type="term" value="C:plasma membrane"/>
    <property type="evidence" value="ECO:0007669"/>
    <property type="project" value="UniProtKB-SubCell"/>
</dbReference>
<dbReference type="GO" id="GO:0098552">
    <property type="term" value="C:side of membrane"/>
    <property type="evidence" value="ECO:0007669"/>
    <property type="project" value="UniProtKB-KW"/>
</dbReference>
<dbReference type="InterPro" id="IPR008882">
    <property type="entry name" value="Trypano_PARP"/>
</dbReference>
<dbReference type="Pfam" id="PF05887">
    <property type="entry name" value="Trypan_PARP"/>
    <property type="match status" value="1"/>
</dbReference>
<comment type="function">
    <text>Major surface antigen of procyclic forms.</text>
</comment>
<comment type="subcellular location">
    <subcellularLocation>
        <location evidence="1">Cell membrane</location>
        <topology evidence="1">Lipid-anchor</topology>
        <topology evidence="1">GPI-anchor</topology>
    </subcellularLocation>
</comment>
<comment type="developmental stage">
    <text>Expressed only at a certain stage during differentiation in the insect vector.</text>
</comment>
<sequence length="114" mass="11611">MAPRSLYLLAILLFSANLFAGVGFAAAADESASNVIVKGGKGKEREDGPEEPEETGPEETGPEETGPEETGPEETGPEETGPEETEPEPEPGAATLKSVALPFAVAAAALVAAF</sequence>
<organism>
    <name type="scientific">Trypanosoma brucei brucei</name>
    <dbReference type="NCBI Taxonomy" id="5702"/>
    <lineage>
        <taxon>Eukaryota</taxon>
        <taxon>Discoba</taxon>
        <taxon>Euglenozoa</taxon>
        <taxon>Kinetoplastea</taxon>
        <taxon>Metakinetoplastina</taxon>
        <taxon>Trypanosomatida</taxon>
        <taxon>Trypanosomatidae</taxon>
        <taxon>Trypanosoma</taxon>
    </lineage>
</organism>
<name>PARA_TRYBB</name>
<protein>
    <recommendedName>
        <fullName>Procyclic form-specific polypeptide A-alpha</fullName>
    </recommendedName>
    <alternativeName>
        <fullName>PARP A-alpha</fullName>
    </alternativeName>
    <alternativeName>
        <fullName>Procyclin A-alpha</fullName>
    </alternativeName>
</protein>